<accession>Q31HX8</accession>
<organism>
    <name type="scientific">Hydrogenovibrio crunogenus (strain DSM 25203 / XCL-2)</name>
    <name type="common">Thiomicrospira crunogena</name>
    <dbReference type="NCBI Taxonomy" id="317025"/>
    <lineage>
        <taxon>Bacteria</taxon>
        <taxon>Pseudomonadati</taxon>
        <taxon>Pseudomonadota</taxon>
        <taxon>Gammaproteobacteria</taxon>
        <taxon>Thiotrichales</taxon>
        <taxon>Piscirickettsiaceae</taxon>
        <taxon>Hydrogenovibrio</taxon>
    </lineage>
</organism>
<keyword id="KW-0963">Cytoplasm</keyword>
<keyword id="KW-0489">Methyltransferase</keyword>
<keyword id="KW-0949">S-adenosyl-L-methionine</keyword>
<keyword id="KW-0808">Transferase</keyword>
<keyword id="KW-0819">tRNA processing</keyword>
<sequence>MRFDVITLFPEMFSALTESGVSRRAYQDQLYQFKTWNPRTYTTDRHKTVDDRPYGGGPGMLMMYPPLKKTVDAITDEVGEKPYVVYLSPQGRPLTQQKLSELQSHSNVTLVCGRYEGIDERFIETVVDEEICVGDFIVSGGELPAMMLMDGMIRLIPGALGHNQSAEQDSFSDGLLDCPHYTRPVEVDGMGVPEVLQEGHHAKIEQWRHEQKLLRTKQKRPDLYTAYLAKHTETQDK</sequence>
<name>TRMD_HYDCU</name>
<comment type="function">
    <text evidence="1">Specifically methylates guanosine-37 in various tRNAs.</text>
</comment>
<comment type="catalytic activity">
    <reaction evidence="1">
        <text>guanosine(37) in tRNA + S-adenosyl-L-methionine = N(1)-methylguanosine(37) in tRNA + S-adenosyl-L-homocysteine + H(+)</text>
        <dbReference type="Rhea" id="RHEA:36899"/>
        <dbReference type="Rhea" id="RHEA-COMP:10145"/>
        <dbReference type="Rhea" id="RHEA-COMP:10147"/>
        <dbReference type="ChEBI" id="CHEBI:15378"/>
        <dbReference type="ChEBI" id="CHEBI:57856"/>
        <dbReference type="ChEBI" id="CHEBI:59789"/>
        <dbReference type="ChEBI" id="CHEBI:73542"/>
        <dbReference type="ChEBI" id="CHEBI:74269"/>
        <dbReference type="EC" id="2.1.1.228"/>
    </reaction>
</comment>
<comment type="subunit">
    <text evidence="1">Homodimer.</text>
</comment>
<comment type="subcellular location">
    <subcellularLocation>
        <location evidence="1">Cytoplasm</location>
    </subcellularLocation>
</comment>
<comment type="similarity">
    <text evidence="1">Belongs to the RNA methyltransferase TrmD family.</text>
</comment>
<protein>
    <recommendedName>
        <fullName evidence="1">tRNA (guanine-N(1)-)-methyltransferase</fullName>
        <ecNumber evidence="1">2.1.1.228</ecNumber>
    </recommendedName>
    <alternativeName>
        <fullName evidence="1">M1G-methyltransferase</fullName>
    </alternativeName>
    <alternativeName>
        <fullName evidence="1">tRNA [GM37] methyltransferase</fullName>
    </alternativeName>
</protein>
<gene>
    <name evidence="1" type="primary">trmD</name>
    <name type="ordered locus">Tcr_0649</name>
</gene>
<evidence type="ECO:0000255" key="1">
    <source>
        <dbReference type="HAMAP-Rule" id="MF_00605"/>
    </source>
</evidence>
<feature type="chain" id="PRO_0000257488" description="tRNA (guanine-N(1)-)-methyltransferase">
    <location>
        <begin position="1"/>
        <end position="237"/>
    </location>
</feature>
<feature type="binding site" evidence="1">
    <location>
        <position position="113"/>
    </location>
    <ligand>
        <name>S-adenosyl-L-methionine</name>
        <dbReference type="ChEBI" id="CHEBI:59789"/>
    </ligand>
</feature>
<feature type="binding site" evidence="1">
    <location>
        <begin position="133"/>
        <end position="138"/>
    </location>
    <ligand>
        <name>S-adenosyl-L-methionine</name>
        <dbReference type="ChEBI" id="CHEBI:59789"/>
    </ligand>
</feature>
<reference key="1">
    <citation type="journal article" date="2006" name="PLoS Biol.">
        <title>The genome of deep-sea vent chemolithoautotroph Thiomicrospira crunogena XCL-2.</title>
        <authorList>
            <person name="Scott K.M."/>
            <person name="Sievert S.M."/>
            <person name="Abril F.N."/>
            <person name="Ball L.A."/>
            <person name="Barrett C.J."/>
            <person name="Blake R.A."/>
            <person name="Boller A.J."/>
            <person name="Chain P.S.G."/>
            <person name="Clark J.A."/>
            <person name="Davis C.R."/>
            <person name="Detter C."/>
            <person name="Do K.F."/>
            <person name="Dobrinski K.P."/>
            <person name="Faza B.I."/>
            <person name="Fitzpatrick K.A."/>
            <person name="Freyermuth S.K."/>
            <person name="Harmer T.L."/>
            <person name="Hauser L.J."/>
            <person name="Huegler M."/>
            <person name="Kerfeld C.A."/>
            <person name="Klotz M.G."/>
            <person name="Kong W.W."/>
            <person name="Land M."/>
            <person name="Lapidus A."/>
            <person name="Larimer F.W."/>
            <person name="Longo D.L."/>
            <person name="Lucas S."/>
            <person name="Malfatti S.A."/>
            <person name="Massey S.E."/>
            <person name="Martin D.D."/>
            <person name="McCuddin Z."/>
            <person name="Meyer F."/>
            <person name="Moore J.L."/>
            <person name="Ocampo L.H. Jr."/>
            <person name="Paul J.H."/>
            <person name="Paulsen I.T."/>
            <person name="Reep D.K."/>
            <person name="Ren Q."/>
            <person name="Ross R.L."/>
            <person name="Sato P.Y."/>
            <person name="Thomas P."/>
            <person name="Tinkham L.E."/>
            <person name="Zeruth G.T."/>
        </authorList>
    </citation>
    <scope>NUCLEOTIDE SEQUENCE [LARGE SCALE GENOMIC DNA]</scope>
    <source>
        <strain>DSM 25203 / XCL-2</strain>
    </source>
</reference>
<proteinExistence type="inferred from homology"/>
<dbReference type="EC" id="2.1.1.228" evidence="1"/>
<dbReference type="EMBL" id="CP000109">
    <property type="protein sequence ID" value="ABB41245.1"/>
    <property type="molecule type" value="Genomic_DNA"/>
</dbReference>
<dbReference type="SMR" id="Q31HX8"/>
<dbReference type="STRING" id="317025.Tcr_0649"/>
<dbReference type="KEGG" id="tcx:Tcr_0649"/>
<dbReference type="eggNOG" id="COG0336">
    <property type="taxonomic scope" value="Bacteria"/>
</dbReference>
<dbReference type="HOGENOM" id="CLU_047363_0_2_6"/>
<dbReference type="GO" id="GO:0005829">
    <property type="term" value="C:cytosol"/>
    <property type="evidence" value="ECO:0007669"/>
    <property type="project" value="TreeGrafter"/>
</dbReference>
<dbReference type="GO" id="GO:0052906">
    <property type="term" value="F:tRNA (guanine(37)-N1)-methyltransferase activity"/>
    <property type="evidence" value="ECO:0007669"/>
    <property type="project" value="UniProtKB-UniRule"/>
</dbReference>
<dbReference type="GO" id="GO:0002939">
    <property type="term" value="P:tRNA N1-guanine methylation"/>
    <property type="evidence" value="ECO:0007669"/>
    <property type="project" value="TreeGrafter"/>
</dbReference>
<dbReference type="CDD" id="cd18080">
    <property type="entry name" value="TrmD-like"/>
    <property type="match status" value="1"/>
</dbReference>
<dbReference type="FunFam" id="1.10.1270.20:FF:000001">
    <property type="entry name" value="tRNA (guanine-N(1)-)-methyltransferase"/>
    <property type="match status" value="1"/>
</dbReference>
<dbReference type="FunFam" id="3.40.1280.10:FF:000001">
    <property type="entry name" value="tRNA (guanine-N(1)-)-methyltransferase"/>
    <property type="match status" value="1"/>
</dbReference>
<dbReference type="Gene3D" id="3.40.1280.10">
    <property type="match status" value="1"/>
</dbReference>
<dbReference type="Gene3D" id="1.10.1270.20">
    <property type="entry name" value="tRNA(m1g37)methyltransferase, domain 2"/>
    <property type="match status" value="1"/>
</dbReference>
<dbReference type="HAMAP" id="MF_00605">
    <property type="entry name" value="TrmD"/>
    <property type="match status" value="1"/>
</dbReference>
<dbReference type="InterPro" id="IPR029028">
    <property type="entry name" value="Alpha/beta_knot_MTases"/>
</dbReference>
<dbReference type="InterPro" id="IPR023148">
    <property type="entry name" value="tRNA_m1G_MeTrfase_C_sf"/>
</dbReference>
<dbReference type="InterPro" id="IPR002649">
    <property type="entry name" value="tRNA_m1G_MeTrfase_TrmD"/>
</dbReference>
<dbReference type="InterPro" id="IPR029026">
    <property type="entry name" value="tRNA_m1G_MTases_N"/>
</dbReference>
<dbReference type="InterPro" id="IPR016009">
    <property type="entry name" value="tRNA_MeTrfase_TRMD/TRM10"/>
</dbReference>
<dbReference type="NCBIfam" id="NF000648">
    <property type="entry name" value="PRK00026.1"/>
    <property type="match status" value="1"/>
</dbReference>
<dbReference type="NCBIfam" id="TIGR00088">
    <property type="entry name" value="trmD"/>
    <property type="match status" value="1"/>
</dbReference>
<dbReference type="PANTHER" id="PTHR46417">
    <property type="entry name" value="TRNA (GUANINE-N(1)-)-METHYLTRANSFERASE"/>
    <property type="match status" value="1"/>
</dbReference>
<dbReference type="PANTHER" id="PTHR46417:SF1">
    <property type="entry name" value="TRNA (GUANINE-N(1)-)-METHYLTRANSFERASE"/>
    <property type="match status" value="1"/>
</dbReference>
<dbReference type="Pfam" id="PF01746">
    <property type="entry name" value="tRNA_m1G_MT"/>
    <property type="match status" value="1"/>
</dbReference>
<dbReference type="PIRSF" id="PIRSF000386">
    <property type="entry name" value="tRNA_mtase"/>
    <property type="match status" value="1"/>
</dbReference>
<dbReference type="SUPFAM" id="SSF75217">
    <property type="entry name" value="alpha/beta knot"/>
    <property type="match status" value="1"/>
</dbReference>